<dbReference type="EC" id="3.5.4.2" evidence="1"/>
<dbReference type="EMBL" id="CR382125">
    <property type="protein sequence ID" value="CAH00084.1"/>
    <property type="molecule type" value="Genomic_DNA"/>
</dbReference>
<dbReference type="RefSeq" id="XP_454997.1">
    <property type="nucleotide sequence ID" value="XM_454997.1"/>
</dbReference>
<dbReference type="SMR" id="Q6CM42"/>
<dbReference type="FunCoup" id="Q6CM42">
    <property type="interactions" value="660"/>
</dbReference>
<dbReference type="STRING" id="284590.Q6CM42"/>
<dbReference type="PaxDb" id="284590-Q6CM42"/>
<dbReference type="KEGG" id="kla:KLLA0_E23167g"/>
<dbReference type="eggNOG" id="KOG1097">
    <property type="taxonomic scope" value="Eukaryota"/>
</dbReference>
<dbReference type="HOGENOM" id="CLU_039228_7_0_1"/>
<dbReference type="InParanoid" id="Q6CM42"/>
<dbReference type="OMA" id="NKIALPW"/>
<dbReference type="Proteomes" id="UP000000598">
    <property type="component" value="Chromosome E"/>
</dbReference>
<dbReference type="GO" id="GO:0005829">
    <property type="term" value="C:cytosol"/>
    <property type="evidence" value="ECO:0007669"/>
    <property type="project" value="TreeGrafter"/>
</dbReference>
<dbReference type="GO" id="GO:0005634">
    <property type="term" value="C:nucleus"/>
    <property type="evidence" value="ECO:0007669"/>
    <property type="project" value="UniProtKB-SubCell"/>
</dbReference>
<dbReference type="GO" id="GO:0000034">
    <property type="term" value="F:adenine deaminase activity"/>
    <property type="evidence" value="ECO:0007669"/>
    <property type="project" value="UniProtKB-UniRule"/>
</dbReference>
<dbReference type="GO" id="GO:0008270">
    <property type="term" value="F:zinc ion binding"/>
    <property type="evidence" value="ECO:0007669"/>
    <property type="project" value="UniProtKB-UniRule"/>
</dbReference>
<dbReference type="GO" id="GO:0006146">
    <property type="term" value="P:adenine catabolic process"/>
    <property type="evidence" value="ECO:0007669"/>
    <property type="project" value="UniProtKB-UniRule"/>
</dbReference>
<dbReference type="GO" id="GO:0043103">
    <property type="term" value="P:hypoxanthine salvage"/>
    <property type="evidence" value="ECO:0007669"/>
    <property type="project" value="UniProtKB-UniRule"/>
</dbReference>
<dbReference type="GO" id="GO:0009117">
    <property type="term" value="P:nucleotide metabolic process"/>
    <property type="evidence" value="ECO:0007669"/>
    <property type="project" value="UniProtKB-KW"/>
</dbReference>
<dbReference type="GO" id="GO:0009168">
    <property type="term" value="P:purine ribonucleoside monophosphate biosynthetic process"/>
    <property type="evidence" value="ECO:0007669"/>
    <property type="project" value="InterPro"/>
</dbReference>
<dbReference type="CDD" id="cd01320">
    <property type="entry name" value="ADA"/>
    <property type="match status" value="1"/>
</dbReference>
<dbReference type="FunFam" id="3.20.20.140:FF:000039">
    <property type="entry name" value="Adenine deaminase"/>
    <property type="match status" value="1"/>
</dbReference>
<dbReference type="Gene3D" id="3.20.20.140">
    <property type="entry name" value="Metal-dependent hydrolases"/>
    <property type="match status" value="1"/>
</dbReference>
<dbReference type="HAMAP" id="MF_01962">
    <property type="entry name" value="Adenine_deaminase"/>
    <property type="match status" value="1"/>
</dbReference>
<dbReference type="InterPro" id="IPR006650">
    <property type="entry name" value="A/AMP_deam_AS"/>
</dbReference>
<dbReference type="InterPro" id="IPR001365">
    <property type="entry name" value="A_deaminase_dom"/>
</dbReference>
<dbReference type="InterPro" id="IPR028892">
    <property type="entry name" value="ADE"/>
</dbReference>
<dbReference type="InterPro" id="IPR006330">
    <property type="entry name" value="Ado/ade_deaminase"/>
</dbReference>
<dbReference type="InterPro" id="IPR032466">
    <property type="entry name" value="Metal_Hydrolase"/>
</dbReference>
<dbReference type="NCBIfam" id="TIGR01430">
    <property type="entry name" value="aden_deam"/>
    <property type="match status" value="1"/>
</dbReference>
<dbReference type="PANTHER" id="PTHR43114">
    <property type="entry name" value="ADENINE DEAMINASE"/>
    <property type="match status" value="1"/>
</dbReference>
<dbReference type="PANTHER" id="PTHR43114:SF6">
    <property type="entry name" value="ADENINE DEAMINASE"/>
    <property type="match status" value="1"/>
</dbReference>
<dbReference type="Pfam" id="PF00962">
    <property type="entry name" value="A_deaminase"/>
    <property type="match status" value="1"/>
</dbReference>
<dbReference type="SUPFAM" id="SSF51556">
    <property type="entry name" value="Metallo-dependent hydrolases"/>
    <property type="match status" value="1"/>
</dbReference>
<dbReference type="PROSITE" id="PS00485">
    <property type="entry name" value="A_DEAMINASE"/>
    <property type="match status" value="1"/>
</dbReference>
<protein>
    <recommendedName>
        <fullName evidence="1">Adenine deaminase</fullName>
        <shortName evidence="1">ADE</shortName>
        <ecNumber evidence="1">3.5.4.2</ecNumber>
    </recommendedName>
    <alternativeName>
        <fullName evidence="1">Adenine aminohydrolase</fullName>
        <shortName evidence="1">AAH</shortName>
    </alternativeName>
</protein>
<comment type="function">
    <text evidence="1">Catalyzes the hydrolytic deamination of adenine to hypoxanthine. Plays an important role in the purine salvage pathway and in nitrogen catabolism.</text>
</comment>
<comment type="catalytic activity">
    <reaction evidence="1">
        <text>adenine + H2O + H(+) = hypoxanthine + NH4(+)</text>
        <dbReference type="Rhea" id="RHEA:23688"/>
        <dbReference type="ChEBI" id="CHEBI:15377"/>
        <dbReference type="ChEBI" id="CHEBI:15378"/>
        <dbReference type="ChEBI" id="CHEBI:16708"/>
        <dbReference type="ChEBI" id="CHEBI:17368"/>
        <dbReference type="ChEBI" id="CHEBI:28938"/>
        <dbReference type="EC" id="3.5.4.2"/>
    </reaction>
</comment>
<comment type="cofactor">
    <cofactor evidence="1">
        <name>Zn(2+)</name>
        <dbReference type="ChEBI" id="CHEBI:29105"/>
    </cofactor>
    <text evidence="1">Binds 1 zinc ion per subunit.</text>
</comment>
<comment type="subcellular location">
    <subcellularLocation>
        <location evidence="1">Cytoplasm</location>
    </subcellularLocation>
    <subcellularLocation>
        <location evidence="1">Nucleus</location>
    </subcellularLocation>
</comment>
<comment type="similarity">
    <text evidence="1">Belongs to the metallo-dependent hydrolases superfamily. Adenosine and AMP deaminases family. Adenine deaminase type 2 subfamily.</text>
</comment>
<feature type="chain" id="PRO_0000256236" description="Adenine deaminase">
    <location>
        <begin position="1"/>
        <end position="355"/>
    </location>
</feature>
<feature type="active site" description="Proton donor" evidence="1">
    <location>
        <position position="214"/>
    </location>
</feature>
<feature type="binding site" evidence="1">
    <location>
        <position position="23"/>
    </location>
    <ligand>
        <name>Zn(2+)</name>
        <dbReference type="ChEBI" id="CHEBI:29105"/>
        <note>catalytic</note>
    </ligand>
</feature>
<feature type="binding site" evidence="1">
    <location>
        <position position="25"/>
    </location>
    <ligand>
        <name>Zn(2+)</name>
        <dbReference type="ChEBI" id="CHEBI:29105"/>
        <note>catalytic</note>
    </ligand>
</feature>
<feature type="binding site" evidence="1">
    <location>
        <position position="211"/>
    </location>
    <ligand>
        <name>Zn(2+)</name>
        <dbReference type="ChEBI" id="CHEBI:29105"/>
        <note>catalytic</note>
    </ligand>
</feature>
<feature type="binding site" evidence="1">
    <location>
        <position position="292"/>
    </location>
    <ligand>
        <name>Zn(2+)</name>
        <dbReference type="ChEBI" id="CHEBI:29105"/>
        <note>catalytic</note>
    </ligand>
</feature>
<feature type="binding site" evidence="1">
    <location>
        <position position="293"/>
    </location>
    <ligand>
        <name>substrate</name>
    </ligand>
</feature>
<feature type="site" description="Important for catalytic activity" evidence="1">
    <location>
        <position position="235"/>
    </location>
</feature>
<name>ADE_KLULA</name>
<gene>
    <name evidence="1" type="primary">AAH1</name>
    <name type="ordered locus">KLLA0E23254g</name>
</gene>
<reference key="1">
    <citation type="journal article" date="2004" name="Nature">
        <title>Genome evolution in yeasts.</title>
        <authorList>
            <person name="Dujon B."/>
            <person name="Sherman D."/>
            <person name="Fischer G."/>
            <person name="Durrens P."/>
            <person name="Casaregola S."/>
            <person name="Lafontaine I."/>
            <person name="de Montigny J."/>
            <person name="Marck C."/>
            <person name="Neuveglise C."/>
            <person name="Talla E."/>
            <person name="Goffard N."/>
            <person name="Frangeul L."/>
            <person name="Aigle M."/>
            <person name="Anthouard V."/>
            <person name="Babour A."/>
            <person name="Barbe V."/>
            <person name="Barnay S."/>
            <person name="Blanchin S."/>
            <person name="Beckerich J.-M."/>
            <person name="Beyne E."/>
            <person name="Bleykasten C."/>
            <person name="Boisrame A."/>
            <person name="Boyer J."/>
            <person name="Cattolico L."/>
            <person name="Confanioleri F."/>
            <person name="de Daruvar A."/>
            <person name="Despons L."/>
            <person name="Fabre E."/>
            <person name="Fairhead C."/>
            <person name="Ferry-Dumazet H."/>
            <person name="Groppi A."/>
            <person name="Hantraye F."/>
            <person name="Hennequin C."/>
            <person name="Jauniaux N."/>
            <person name="Joyet P."/>
            <person name="Kachouri R."/>
            <person name="Kerrest A."/>
            <person name="Koszul R."/>
            <person name="Lemaire M."/>
            <person name="Lesur I."/>
            <person name="Ma L."/>
            <person name="Muller H."/>
            <person name="Nicaud J.-M."/>
            <person name="Nikolski M."/>
            <person name="Oztas S."/>
            <person name="Ozier-Kalogeropoulos O."/>
            <person name="Pellenz S."/>
            <person name="Potier S."/>
            <person name="Richard G.-F."/>
            <person name="Straub M.-L."/>
            <person name="Suleau A."/>
            <person name="Swennen D."/>
            <person name="Tekaia F."/>
            <person name="Wesolowski-Louvel M."/>
            <person name="Westhof E."/>
            <person name="Wirth B."/>
            <person name="Zeniou-Meyer M."/>
            <person name="Zivanovic Y."/>
            <person name="Bolotin-Fukuhara M."/>
            <person name="Thierry A."/>
            <person name="Bouchier C."/>
            <person name="Caudron B."/>
            <person name="Scarpelli C."/>
            <person name="Gaillardin C."/>
            <person name="Weissenbach J."/>
            <person name="Wincker P."/>
            <person name="Souciet J.-L."/>
        </authorList>
    </citation>
    <scope>NUCLEOTIDE SEQUENCE [LARGE SCALE GENOMIC DNA]</scope>
    <source>
        <strain>ATCC 8585 / CBS 2359 / DSM 70799 / NBRC 1267 / NRRL Y-1140 / WM37</strain>
    </source>
</reference>
<accession>Q6CM42</accession>
<evidence type="ECO:0000255" key="1">
    <source>
        <dbReference type="HAMAP-Rule" id="MF_03145"/>
    </source>
</evidence>
<organism>
    <name type="scientific">Kluyveromyces lactis (strain ATCC 8585 / CBS 2359 / DSM 70799 / NBRC 1267 / NRRL Y-1140 / WM37)</name>
    <name type="common">Yeast</name>
    <name type="synonym">Candida sphaerica</name>
    <dbReference type="NCBI Taxonomy" id="284590"/>
    <lineage>
        <taxon>Eukaryota</taxon>
        <taxon>Fungi</taxon>
        <taxon>Dikarya</taxon>
        <taxon>Ascomycota</taxon>
        <taxon>Saccharomycotina</taxon>
        <taxon>Saccharomycetes</taxon>
        <taxon>Saccharomycetales</taxon>
        <taxon>Saccharomycetaceae</taxon>
        <taxon>Kluyveromyces</taxon>
    </lineage>
</organism>
<sequence length="355" mass="40428">MAKFECTDEVTNFLTELPKCEHHLHLEGTLEPELLFQLVERNGVQLPGTFPKTVNELHVIYNNFADLQDFLNYYYIGCNVLLSEDDFFELAWSYFKRVSTQGLRHAEVFYDPQSHTSRGISLEVVTKGFERACAKAQEEFNISTKLIMCLLRHCPVEECMDTVKSAKSLIESGVIDGLGLDSSERPFPPELFVECYQLAKSYNKELQLTAHAGEEGDPSFVTNTLDLLETTRIDHGVRSIEDAELIKRLAAQKVMLTLCPLSNVKLQVVKDVSELPLQEFLDNDVPFSINSDDPAYFGGYILQNYLEVYSRFGWSKAVWAKIARQSIEGSWCDPKRKQELLSEVSEVVNKYVNLP</sequence>
<keyword id="KW-0963">Cytoplasm</keyword>
<keyword id="KW-0378">Hydrolase</keyword>
<keyword id="KW-0479">Metal-binding</keyword>
<keyword id="KW-0546">Nucleotide metabolism</keyword>
<keyword id="KW-0539">Nucleus</keyword>
<keyword id="KW-1185">Reference proteome</keyword>
<keyword id="KW-0862">Zinc</keyword>
<proteinExistence type="inferred from homology"/>